<sequence length="187" mass="21488">MVEYWKRNFFMVLVLQAFYLANCLTDEEIPEEWLLLHVLQGQIGAGNYSYLRLNHEGTIILQVQSLKGDADIYVSSLTLNPTFDDYELQSTTCGLDKITIAHHLSRPVGIGIYGHPSHMESEFELKVYYDRTVREDPFADASYDPEVLEAKQRQQQQQTSLDSSQEEESVLRTILIGVLKIVLELLF</sequence>
<reference key="1">
    <citation type="submission" date="2004-06" db="EMBL/GenBank/DDBJ databases">
        <authorList>
            <consortium name="NIH - Xenopus Gene Collection (XGC) project"/>
        </authorList>
    </citation>
    <scope>NUCLEOTIDE SEQUENCE [LARGE SCALE MRNA]</scope>
</reference>
<protein>
    <recommendedName>
        <fullName>UPF0669 protein C6orf120 homolog</fullName>
    </recommendedName>
</protein>
<name>CF120_XENTR</name>
<keyword id="KW-0325">Glycoprotein</keyword>
<keyword id="KW-1185">Reference proteome</keyword>
<keyword id="KW-0964">Secreted</keyword>
<keyword id="KW-0732">Signal</keyword>
<organism>
    <name type="scientific">Xenopus tropicalis</name>
    <name type="common">Western clawed frog</name>
    <name type="synonym">Silurana tropicalis</name>
    <dbReference type="NCBI Taxonomy" id="8364"/>
    <lineage>
        <taxon>Eukaryota</taxon>
        <taxon>Metazoa</taxon>
        <taxon>Chordata</taxon>
        <taxon>Craniata</taxon>
        <taxon>Vertebrata</taxon>
        <taxon>Euteleostomi</taxon>
        <taxon>Amphibia</taxon>
        <taxon>Batrachia</taxon>
        <taxon>Anura</taxon>
        <taxon>Pipoidea</taxon>
        <taxon>Pipidae</taxon>
        <taxon>Xenopodinae</taxon>
        <taxon>Xenopus</taxon>
        <taxon>Silurana</taxon>
    </lineage>
</organism>
<accession>Q6DIW0</accession>
<dbReference type="EMBL" id="BC075425">
    <property type="protein sequence ID" value="AAH75425.1"/>
    <property type="molecule type" value="mRNA"/>
</dbReference>
<dbReference type="RefSeq" id="NP_001004942.1">
    <property type="nucleotide sequence ID" value="NM_001004942.1"/>
</dbReference>
<dbReference type="RefSeq" id="XP_012818338.1">
    <property type="nucleotide sequence ID" value="XM_012962884.3"/>
</dbReference>
<dbReference type="RefSeq" id="XP_012818339.1">
    <property type="nucleotide sequence ID" value="XM_012962885.3"/>
</dbReference>
<dbReference type="RefSeq" id="XP_017949329.1">
    <property type="nucleotide sequence ID" value="XM_018093840.1"/>
</dbReference>
<dbReference type="FunCoup" id="Q6DIW0">
    <property type="interactions" value="472"/>
</dbReference>
<dbReference type="STRING" id="8364.ENSXETP00000007264"/>
<dbReference type="PaxDb" id="8364-ENSXETP00000053781"/>
<dbReference type="GeneID" id="448344"/>
<dbReference type="KEGG" id="xtr:448344"/>
<dbReference type="AGR" id="Xenbase:XB-GENE-963425"/>
<dbReference type="CTD" id="127485496"/>
<dbReference type="Xenbase" id="XB-GENE-963425">
    <property type="gene designation" value="c5h6orf120"/>
</dbReference>
<dbReference type="eggNOG" id="ENOG502RXJP">
    <property type="taxonomic scope" value="Eukaryota"/>
</dbReference>
<dbReference type="HOGENOM" id="CLU_113576_1_0_1"/>
<dbReference type="InParanoid" id="Q6DIW0"/>
<dbReference type="OMA" id="FGETAYS"/>
<dbReference type="OrthoDB" id="10046613at2759"/>
<dbReference type="PhylomeDB" id="Q6DIW0"/>
<dbReference type="TreeFam" id="TF331743"/>
<dbReference type="Reactome" id="R-XTR-6798695">
    <property type="pathway name" value="Neutrophil degranulation"/>
</dbReference>
<dbReference type="Proteomes" id="UP000008143">
    <property type="component" value="Chromosome 5"/>
</dbReference>
<dbReference type="Bgee" id="ENSXETG00000025079">
    <property type="expression patterns" value="Expressed in skeletal muscle tissue and 15 other cell types or tissues"/>
</dbReference>
<dbReference type="GO" id="GO:0005576">
    <property type="term" value="C:extracellular region"/>
    <property type="evidence" value="ECO:0007669"/>
    <property type="project" value="UniProtKB-SubCell"/>
</dbReference>
<dbReference type="InterPro" id="IPR031420">
    <property type="entry name" value="UPF0669"/>
</dbReference>
<dbReference type="PANTHER" id="PTHR31703">
    <property type="entry name" value="UPF0669 PROTEIN C6ORF120"/>
    <property type="match status" value="1"/>
</dbReference>
<dbReference type="PANTHER" id="PTHR31703:SF2">
    <property type="entry name" value="UPF0669 PROTEIN C6ORF120"/>
    <property type="match status" value="1"/>
</dbReference>
<dbReference type="Pfam" id="PF17065">
    <property type="entry name" value="UPF0669"/>
    <property type="match status" value="1"/>
</dbReference>
<feature type="signal peptide" evidence="1">
    <location>
        <begin position="1"/>
        <end position="23"/>
    </location>
</feature>
<feature type="chain" id="PRO_0000352878" description="UPF0669 protein C6orf120 homolog">
    <location>
        <begin position="24"/>
        <end position="187"/>
    </location>
</feature>
<feature type="glycosylation site" description="N-linked (GlcNAc...) asparagine" evidence="1">
    <location>
        <position position="47"/>
    </location>
</feature>
<proteinExistence type="evidence at transcript level"/>
<comment type="subcellular location">
    <subcellularLocation>
        <location evidence="2">Secreted</location>
    </subcellularLocation>
</comment>
<comment type="similarity">
    <text evidence="2">Belongs to the UPF0669 family.</text>
</comment>
<evidence type="ECO:0000255" key="1"/>
<evidence type="ECO:0000305" key="2"/>